<protein>
    <recommendedName>
        <fullName evidence="1">Recombination protein RecR</fullName>
    </recommendedName>
</protein>
<dbReference type="EMBL" id="CP000284">
    <property type="protein sequence ID" value="ABE49842.1"/>
    <property type="molecule type" value="Genomic_DNA"/>
</dbReference>
<dbReference type="RefSeq" id="WP_011479796.1">
    <property type="nucleotide sequence ID" value="NC_007947.1"/>
</dbReference>
<dbReference type="SMR" id="Q1H0Z5"/>
<dbReference type="STRING" id="265072.Mfla_1574"/>
<dbReference type="KEGG" id="mfa:Mfla_1574"/>
<dbReference type="eggNOG" id="COG0353">
    <property type="taxonomic scope" value="Bacteria"/>
</dbReference>
<dbReference type="HOGENOM" id="CLU_060739_1_2_4"/>
<dbReference type="OrthoDB" id="9802672at2"/>
<dbReference type="Proteomes" id="UP000002440">
    <property type="component" value="Chromosome"/>
</dbReference>
<dbReference type="GO" id="GO:0003677">
    <property type="term" value="F:DNA binding"/>
    <property type="evidence" value="ECO:0007669"/>
    <property type="project" value="UniProtKB-UniRule"/>
</dbReference>
<dbReference type="GO" id="GO:0008270">
    <property type="term" value="F:zinc ion binding"/>
    <property type="evidence" value="ECO:0007669"/>
    <property type="project" value="UniProtKB-KW"/>
</dbReference>
<dbReference type="GO" id="GO:0006310">
    <property type="term" value="P:DNA recombination"/>
    <property type="evidence" value="ECO:0007669"/>
    <property type="project" value="UniProtKB-UniRule"/>
</dbReference>
<dbReference type="GO" id="GO:0006281">
    <property type="term" value="P:DNA repair"/>
    <property type="evidence" value="ECO:0007669"/>
    <property type="project" value="UniProtKB-UniRule"/>
</dbReference>
<dbReference type="CDD" id="cd01025">
    <property type="entry name" value="TOPRIM_recR"/>
    <property type="match status" value="1"/>
</dbReference>
<dbReference type="Gene3D" id="3.40.1360.10">
    <property type="match status" value="1"/>
</dbReference>
<dbReference type="Gene3D" id="6.10.250.240">
    <property type="match status" value="1"/>
</dbReference>
<dbReference type="Gene3D" id="1.10.8.420">
    <property type="entry name" value="RecR Domain 1"/>
    <property type="match status" value="1"/>
</dbReference>
<dbReference type="HAMAP" id="MF_00017">
    <property type="entry name" value="RecR"/>
    <property type="match status" value="1"/>
</dbReference>
<dbReference type="InterPro" id="IPR000093">
    <property type="entry name" value="DNA_Rcmb_RecR"/>
</dbReference>
<dbReference type="InterPro" id="IPR023627">
    <property type="entry name" value="Rcmb_RecR"/>
</dbReference>
<dbReference type="InterPro" id="IPR015967">
    <property type="entry name" value="Rcmb_RecR_Znf"/>
</dbReference>
<dbReference type="InterPro" id="IPR006171">
    <property type="entry name" value="TOPRIM_dom"/>
</dbReference>
<dbReference type="InterPro" id="IPR034137">
    <property type="entry name" value="TOPRIM_RecR"/>
</dbReference>
<dbReference type="NCBIfam" id="TIGR00615">
    <property type="entry name" value="recR"/>
    <property type="match status" value="1"/>
</dbReference>
<dbReference type="PANTHER" id="PTHR30446">
    <property type="entry name" value="RECOMBINATION PROTEIN RECR"/>
    <property type="match status" value="1"/>
</dbReference>
<dbReference type="PANTHER" id="PTHR30446:SF0">
    <property type="entry name" value="RECOMBINATION PROTEIN RECR"/>
    <property type="match status" value="1"/>
</dbReference>
<dbReference type="Pfam" id="PF21175">
    <property type="entry name" value="RecR_C"/>
    <property type="match status" value="1"/>
</dbReference>
<dbReference type="Pfam" id="PF21176">
    <property type="entry name" value="RecR_HhH"/>
    <property type="match status" value="1"/>
</dbReference>
<dbReference type="Pfam" id="PF02132">
    <property type="entry name" value="RecR_ZnF"/>
    <property type="match status" value="1"/>
</dbReference>
<dbReference type="Pfam" id="PF13662">
    <property type="entry name" value="Toprim_4"/>
    <property type="match status" value="1"/>
</dbReference>
<dbReference type="SMART" id="SM00493">
    <property type="entry name" value="TOPRIM"/>
    <property type="match status" value="1"/>
</dbReference>
<dbReference type="SUPFAM" id="SSF111304">
    <property type="entry name" value="Recombination protein RecR"/>
    <property type="match status" value="1"/>
</dbReference>
<dbReference type="PROSITE" id="PS01300">
    <property type="entry name" value="RECR"/>
    <property type="match status" value="1"/>
</dbReference>
<dbReference type="PROSITE" id="PS50880">
    <property type="entry name" value="TOPRIM"/>
    <property type="match status" value="1"/>
</dbReference>
<evidence type="ECO:0000255" key="1">
    <source>
        <dbReference type="HAMAP-Rule" id="MF_00017"/>
    </source>
</evidence>
<organism>
    <name type="scientific">Methylobacillus flagellatus (strain ATCC 51484 / DSM 6875 / VKM B-1610 / KT)</name>
    <dbReference type="NCBI Taxonomy" id="265072"/>
    <lineage>
        <taxon>Bacteria</taxon>
        <taxon>Pseudomonadati</taxon>
        <taxon>Pseudomonadota</taxon>
        <taxon>Betaproteobacteria</taxon>
        <taxon>Nitrosomonadales</taxon>
        <taxon>Methylophilaceae</taxon>
        <taxon>Methylobacillus</taxon>
    </lineage>
</organism>
<name>RECR_METFK</name>
<proteinExistence type="inferred from homology"/>
<sequence>MRNPPALEQLVEALRCLPGVGPKSALRMAYYLLQRDRKGAGILAKSLDQALQVVSHCNLCNNFSEQEICPLCASPARDRTLLCIVEMPSDLMMLEQTQTYQGMYFVLMGRLSPLDGIGPRDIHLDKLLKRAQDGKVEEVILATNYTVEGEATAHYVSELLRARGIQVSRIARGLPMGGEIEHVDSGTLAQALLERRHVR</sequence>
<accession>Q1H0Z5</accession>
<comment type="function">
    <text evidence="1">May play a role in DNA repair. It seems to be involved in an RecBC-independent recombinational process of DNA repair. It may act with RecF and RecO.</text>
</comment>
<comment type="similarity">
    <text evidence="1">Belongs to the RecR family.</text>
</comment>
<reference key="1">
    <citation type="submission" date="2006-03" db="EMBL/GenBank/DDBJ databases">
        <title>Complete sequence of Methylobacillus flagellatus KT.</title>
        <authorList>
            <consortium name="US DOE Joint Genome Institute"/>
            <person name="Copeland A."/>
            <person name="Lucas S."/>
            <person name="Lapidus A."/>
            <person name="Barry K."/>
            <person name="Detter J.C."/>
            <person name="Glavina del Rio T."/>
            <person name="Hammon N."/>
            <person name="Israni S."/>
            <person name="Dalin E."/>
            <person name="Tice H."/>
            <person name="Pitluck S."/>
            <person name="Brettin T."/>
            <person name="Bruce D."/>
            <person name="Han C."/>
            <person name="Tapia R."/>
            <person name="Saunders E."/>
            <person name="Gilna P."/>
            <person name="Schmutz J."/>
            <person name="Larimer F."/>
            <person name="Land M."/>
            <person name="Kyrpides N."/>
            <person name="Anderson I."/>
            <person name="Richardson P."/>
        </authorList>
    </citation>
    <scope>NUCLEOTIDE SEQUENCE [LARGE SCALE GENOMIC DNA]</scope>
    <source>
        <strain>ATCC 51484 / DSM 6875 / VKM B-1610 / KT</strain>
    </source>
</reference>
<keyword id="KW-0227">DNA damage</keyword>
<keyword id="KW-0233">DNA recombination</keyword>
<keyword id="KW-0234">DNA repair</keyword>
<keyword id="KW-0479">Metal-binding</keyword>
<keyword id="KW-1185">Reference proteome</keyword>
<keyword id="KW-0862">Zinc</keyword>
<keyword id="KW-0863">Zinc-finger</keyword>
<gene>
    <name evidence="1" type="primary">recR</name>
    <name type="ordered locus">Mfla_1574</name>
</gene>
<feature type="chain" id="PRO_0000322909" description="Recombination protein RecR">
    <location>
        <begin position="1"/>
        <end position="199"/>
    </location>
</feature>
<feature type="domain" description="Toprim" evidence="1">
    <location>
        <begin position="80"/>
        <end position="175"/>
    </location>
</feature>
<feature type="zinc finger region" description="C4-type" evidence="1">
    <location>
        <begin position="57"/>
        <end position="72"/>
    </location>
</feature>